<name>E13J_TOBAC</name>
<proteinExistence type="evidence at protein level"/>
<organism>
    <name type="scientific">Nicotiana tabacum</name>
    <name type="common">Common tobacco</name>
    <dbReference type="NCBI Taxonomy" id="4097"/>
    <lineage>
        <taxon>Eukaryota</taxon>
        <taxon>Viridiplantae</taxon>
        <taxon>Streptophyta</taxon>
        <taxon>Embryophyta</taxon>
        <taxon>Tracheophyta</taxon>
        <taxon>Spermatophyta</taxon>
        <taxon>Magnoliopsida</taxon>
        <taxon>eudicotyledons</taxon>
        <taxon>Gunneridae</taxon>
        <taxon>Pentapetalae</taxon>
        <taxon>asterids</taxon>
        <taxon>lamiids</taxon>
        <taxon>Solanales</taxon>
        <taxon>Solanaceae</taxon>
        <taxon>Nicotianoideae</taxon>
        <taxon>Nicotianeae</taxon>
        <taxon>Nicotiana</taxon>
    </lineage>
</organism>
<feature type="chain" id="PRO_0000205278" description="Glucan endo-1,3-beta-glucosidase, acidic isoform PR-O">
    <location>
        <begin position="1" status="less than"/>
        <end position="160"/>
    </location>
</feature>
<feature type="active site" description="Nucleophile" evidence="1">
    <location>
        <position position="81"/>
    </location>
</feature>
<feature type="sequence conflict" description="In Ref. 2; AA sequence." evidence="2" ref="2">
    <original>A</original>
    <variation>N</variation>
    <location>
        <position position="128"/>
    </location>
</feature>
<feature type="sequence conflict" description="In Ref. 2; AA sequence." evidence="2" ref="2">
    <original>K</original>
    <variation>Q</variation>
    <location>
        <position position="135"/>
    </location>
</feature>
<feature type="non-terminal residue">
    <location>
        <position position="1"/>
    </location>
</feature>
<reference key="1">
    <citation type="journal article" date="1991" name="Plant Physiol.">
        <title>Differential regulation of beta-1,3-glucanase messenger RNAs in response to pathogen infection.</title>
        <authorList>
            <person name="Ward E.R."/>
            <person name="Payne G.B."/>
            <person name="Moyer M.B."/>
            <person name="Williams S.C."/>
            <person name="Dincher S.S."/>
            <person name="Sharkey K.C."/>
            <person name="Beck J.J."/>
            <person name="Taylor H.T."/>
            <person name="Ahl-Goy P."/>
            <person name="Meins F."/>
            <person name="Ryals J.A."/>
        </authorList>
    </citation>
    <scope>NUCLEOTIDE SEQUENCE [MRNA]</scope>
    <scope>PARTIAL PROTEIN SEQUENCE</scope>
    <source>
        <strain>cv. Xanthi NC</strain>
        <tissue>Leaf</tissue>
    </source>
</reference>
<reference key="2">
    <citation type="journal article" date="1989" name="Proc. Natl. Acad. Sci. U.S.A.">
        <title>Characterization of vacuolar and extracellular beta(1,3)-glucanases of tobacco: evidence for a strictly compartmentalized plant defense system.</title>
        <authorList>
            <person name="van den Bulcke M."/>
            <person name="Bauw G."/>
            <person name="Castresana C."/>
            <person name="van Montagu M."/>
            <person name="Vandekerckhove J."/>
        </authorList>
    </citation>
    <scope>PROTEIN SEQUENCE OF 70-93; 126-136; 143-152 AND 155-160</scope>
</reference>
<comment type="function">
    <text>Implicated in the defense of plants against pathogens.</text>
</comment>
<comment type="catalytic activity">
    <reaction>
        <text>Hydrolysis of (1-&gt;3)-beta-D-glucosidic linkages in (1-&gt;3)-beta-D-glucans.</text>
        <dbReference type="EC" id="3.2.1.39"/>
    </reaction>
</comment>
<comment type="subcellular location">
    <subcellularLocation>
        <location>Secreted</location>
        <location>Extracellular space</location>
    </subcellularLocation>
</comment>
<comment type="induction">
    <text>Not found in healthy tissues, but accumulates to high levels in the extracellular compartment of leaves in response to pathogen infection or treatment with salicylic acid.</text>
</comment>
<comment type="PTM">
    <text>The N-terminus is blocked.</text>
</comment>
<comment type="similarity">
    <text evidence="2">Belongs to the glycosyl hydrolase 17 family.</text>
</comment>
<evidence type="ECO:0000250" key="1">
    <source>
        <dbReference type="UniProtKB" id="O22317"/>
    </source>
</evidence>
<evidence type="ECO:0000305" key="2"/>
<accession>P52397</accession>
<keyword id="KW-0903">Direct protein sequencing</keyword>
<keyword id="KW-0326">Glycosidase</keyword>
<keyword id="KW-0378">Hydrolase</keyword>
<keyword id="KW-0611">Plant defense</keyword>
<keyword id="KW-1185">Reference proteome</keyword>
<keyword id="KW-0964">Secreted</keyword>
<protein>
    <recommendedName>
        <fullName>Glucan endo-1,3-beta-glucosidase, acidic isoform PR-O</fullName>
        <ecNumber>3.2.1.39</ecNumber>
    </recommendedName>
    <alternativeName>
        <fullName>(1-&gt;3)-beta-glucan endohydrolase</fullName>
        <shortName>(1-&gt;3)-beta-glucanase</shortName>
    </alternativeName>
    <alternativeName>
        <fullName>Beta-1,3-endoglucanase</fullName>
    </alternativeName>
    <alternativeName>
        <fullName>PR-37</fullName>
    </alternativeName>
</protein>
<sequence>NSFINPIIQFLARNNLPLLANVYPYFGHIYNTADVPLSYALFTQQEANPAGYQNLFDALLDSMYFAVEKAGGPNVEIIVSESGWPSEGNSAATIENAQTYYRNLIDHVKRGAGTPKKPGKTIETYLFAMFDENDKKGEITEKHFGLFSPDQRAKYQLNFN</sequence>
<dbReference type="EC" id="3.2.1.39"/>
<dbReference type="EMBL" id="M60461">
    <property type="protein sequence ID" value="AAA34102.1"/>
    <property type="molecule type" value="mRNA"/>
</dbReference>
<dbReference type="SMR" id="P52397"/>
<dbReference type="STRING" id="4097.P52397"/>
<dbReference type="CAZy" id="GH17">
    <property type="family name" value="Glycoside Hydrolase Family 17"/>
</dbReference>
<dbReference type="PaxDb" id="4097-P52397"/>
<dbReference type="Proteomes" id="UP000084051">
    <property type="component" value="Unplaced"/>
</dbReference>
<dbReference type="GO" id="GO:0005576">
    <property type="term" value="C:extracellular region"/>
    <property type="evidence" value="ECO:0007669"/>
    <property type="project" value="UniProtKB-SubCell"/>
</dbReference>
<dbReference type="GO" id="GO:0042973">
    <property type="term" value="F:glucan endo-1,3-beta-D-glucosidase activity"/>
    <property type="evidence" value="ECO:0007669"/>
    <property type="project" value="UniProtKB-EC"/>
</dbReference>
<dbReference type="GO" id="GO:0005975">
    <property type="term" value="P:carbohydrate metabolic process"/>
    <property type="evidence" value="ECO:0007669"/>
    <property type="project" value="InterPro"/>
</dbReference>
<dbReference type="GO" id="GO:0006952">
    <property type="term" value="P:defense response"/>
    <property type="evidence" value="ECO:0007669"/>
    <property type="project" value="UniProtKB-KW"/>
</dbReference>
<dbReference type="Gene3D" id="3.20.20.80">
    <property type="entry name" value="Glycosidases"/>
    <property type="match status" value="1"/>
</dbReference>
<dbReference type="InterPro" id="IPR000490">
    <property type="entry name" value="Glyco_hydro_17"/>
</dbReference>
<dbReference type="InterPro" id="IPR044965">
    <property type="entry name" value="Glyco_hydro_17_plant"/>
</dbReference>
<dbReference type="InterPro" id="IPR017853">
    <property type="entry name" value="Glycoside_hydrolase_SF"/>
</dbReference>
<dbReference type="PANTHER" id="PTHR32227">
    <property type="entry name" value="GLUCAN ENDO-1,3-BETA-GLUCOSIDASE BG1-RELATED-RELATED"/>
    <property type="match status" value="1"/>
</dbReference>
<dbReference type="Pfam" id="PF00332">
    <property type="entry name" value="Glyco_hydro_17"/>
    <property type="match status" value="1"/>
</dbReference>
<dbReference type="SUPFAM" id="SSF51445">
    <property type="entry name" value="(Trans)glycosidases"/>
    <property type="match status" value="1"/>
</dbReference>
<dbReference type="PROSITE" id="PS00587">
    <property type="entry name" value="GLYCOSYL_HYDROL_F17"/>
    <property type="match status" value="1"/>
</dbReference>
<gene>
    <name type="primary">PR0</name>
</gene>